<protein>
    <recommendedName>
        <fullName evidence="1">2,5-dichlorohydroquinone reductive dechlorinase</fullName>
        <shortName evidence="1">2,5-DCHQ dechlorinase</shortName>
        <ecNumber evidence="1">2.5.1.-</ecNumber>
    </recommendedName>
    <alternativeName>
        <fullName evidence="1">Glutathione-dependent reductive dehalogenase</fullName>
    </alternativeName>
</protein>
<organism>
    <name type="scientific">Sphingobium indicum (strain DSM 16412 / CCM 7286 / MTCC 6364 / B90A)</name>
    <dbReference type="NCBI Taxonomy" id="861109"/>
    <lineage>
        <taxon>Bacteria</taxon>
        <taxon>Pseudomonadati</taxon>
        <taxon>Pseudomonadota</taxon>
        <taxon>Alphaproteobacteria</taxon>
        <taxon>Sphingomonadales</taxon>
        <taxon>Sphingomonadaceae</taxon>
        <taxon>Sphingobium</taxon>
    </lineage>
</organism>
<name>LIND_SPHIB</name>
<reference key="1">
    <citation type="journal article" date="2002" name="Appl. Environ. Microbiol.">
        <title>Cloning and characterization of lin genes responsible for the degradation of hexachlorocyclohexane isomers by Sphingomonas paucimobilis strain B90.</title>
        <authorList>
            <person name="Kumari R."/>
            <person name="Subudhi S."/>
            <person name="Suar M."/>
            <person name="Dhingra G."/>
            <person name="Raina V."/>
            <person name="Dogra C."/>
            <person name="Lal S."/>
            <person name="van der Meer J.R."/>
            <person name="Holliger C."/>
            <person name="Lal R."/>
        </authorList>
    </citation>
    <scope>NUCLEOTIDE SEQUENCE [GENOMIC DNA]</scope>
    <scope>FUNCTION</scope>
    <scope>PATHWAY</scope>
    <source>
        <strain>B90</strain>
    </source>
</reference>
<reference key="2">
    <citation type="journal article" date="2012" name="J. Bacteriol.">
        <title>Genome sequence of Sphingobium indicum B90A, a hexachlorocyclohexane-degrading bacterium.</title>
        <authorList>
            <person name="Anand S."/>
            <person name="Sangwan N."/>
            <person name="Lata P."/>
            <person name="Kaur J."/>
            <person name="Dua A."/>
            <person name="Singh A.K."/>
            <person name="Verma M."/>
            <person name="Kaur J."/>
            <person name="Khurana J.P."/>
            <person name="Khurana P."/>
            <person name="Mathur S."/>
            <person name="Lal R."/>
        </authorList>
    </citation>
    <scope>NUCLEOTIDE SEQUENCE [LARGE SCALE GENOMIC DNA]</scope>
    <source>
        <strain>DSM 16412 / CCM 7286 / MTCC 6364 / B90A</strain>
        <plasmid>pSRL3</plasmid>
    </source>
</reference>
<dbReference type="EC" id="2.5.1.-" evidence="1"/>
<dbReference type="EMBL" id="AY150583">
    <property type="protein sequence ID" value="AAN64243.1"/>
    <property type="molecule type" value="Genomic_DNA"/>
</dbReference>
<dbReference type="EMBL" id="CP013073">
    <property type="protein sequence ID" value="APL96652.1"/>
    <property type="status" value="ALT_INIT"/>
    <property type="molecule type" value="Genomic_DNA"/>
</dbReference>
<dbReference type="RefSeq" id="WP_031293069.1">
    <property type="nucleotide sequence ID" value="NZ_CP013073.1"/>
</dbReference>
<dbReference type="SMR" id="A0A1L5BUX8"/>
<dbReference type="KEGG" id="sinb:SIDU_18555"/>
<dbReference type="UniPathway" id="UPA00689"/>
<dbReference type="Proteomes" id="UP000004550">
    <property type="component" value="Plasmid pSRL3"/>
</dbReference>
<dbReference type="GO" id="GO:0016740">
    <property type="term" value="F:transferase activity"/>
    <property type="evidence" value="ECO:0007669"/>
    <property type="project" value="UniProtKB-KW"/>
</dbReference>
<dbReference type="GO" id="GO:0009056">
    <property type="term" value="P:catabolic process"/>
    <property type="evidence" value="ECO:0007669"/>
    <property type="project" value="UniProtKB-KW"/>
</dbReference>
<dbReference type="GO" id="GO:0000266">
    <property type="term" value="P:mitochondrial fission"/>
    <property type="evidence" value="ECO:0007669"/>
    <property type="project" value="TreeGrafter"/>
</dbReference>
<dbReference type="GO" id="GO:0008053">
    <property type="term" value="P:mitochondrial fusion"/>
    <property type="evidence" value="ECO:0007669"/>
    <property type="project" value="TreeGrafter"/>
</dbReference>
<dbReference type="GO" id="GO:0006626">
    <property type="term" value="P:protein targeting to mitochondrion"/>
    <property type="evidence" value="ECO:0007669"/>
    <property type="project" value="TreeGrafter"/>
</dbReference>
<dbReference type="GO" id="GO:0009636">
    <property type="term" value="P:response to toxic substance"/>
    <property type="evidence" value="ECO:0007669"/>
    <property type="project" value="UniProtKB-KW"/>
</dbReference>
<dbReference type="CDD" id="cd00299">
    <property type="entry name" value="GST_C_family"/>
    <property type="match status" value="1"/>
</dbReference>
<dbReference type="CDD" id="cd00570">
    <property type="entry name" value="GST_N_family"/>
    <property type="match status" value="1"/>
</dbReference>
<dbReference type="Gene3D" id="1.20.1050.10">
    <property type="match status" value="1"/>
</dbReference>
<dbReference type="Gene3D" id="3.40.30.10">
    <property type="entry name" value="Glutaredoxin"/>
    <property type="match status" value="1"/>
</dbReference>
<dbReference type="InterPro" id="IPR010987">
    <property type="entry name" value="Glutathione-S-Trfase_C-like"/>
</dbReference>
<dbReference type="InterPro" id="IPR036282">
    <property type="entry name" value="Glutathione-S-Trfase_C_sf"/>
</dbReference>
<dbReference type="InterPro" id="IPR004045">
    <property type="entry name" value="Glutathione_S-Trfase_N"/>
</dbReference>
<dbReference type="InterPro" id="IPR036249">
    <property type="entry name" value="Thioredoxin-like_sf"/>
</dbReference>
<dbReference type="PANTHER" id="PTHR44188">
    <property type="entry name" value="GDAP1, ISOFORM A"/>
    <property type="match status" value="1"/>
</dbReference>
<dbReference type="PANTHER" id="PTHR44188:SF1">
    <property type="entry name" value="GDAP1, ISOFORM A"/>
    <property type="match status" value="1"/>
</dbReference>
<dbReference type="Pfam" id="PF13410">
    <property type="entry name" value="GST_C_2"/>
    <property type="match status" value="1"/>
</dbReference>
<dbReference type="Pfam" id="PF13409">
    <property type="entry name" value="GST_N_2"/>
    <property type="match status" value="1"/>
</dbReference>
<dbReference type="SUPFAM" id="SSF47616">
    <property type="entry name" value="GST C-terminal domain-like"/>
    <property type="match status" value="1"/>
</dbReference>
<dbReference type="SUPFAM" id="SSF52833">
    <property type="entry name" value="Thioredoxin-like"/>
    <property type="match status" value="1"/>
</dbReference>
<dbReference type="PROSITE" id="PS50405">
    <property type="entry name" value="GST_CTER"/>
    <property type="match status" value="1"/>
</dbReference>
<dbReference type="PROSITE" id="PS50404">
    <property type="entry name" value="GST_NTER"/>
    <property type="match status" value="1"/>
</dbReference>
<sequence>MSADTETLARKVREEVIKPEQSTLISPDRQSPSLLRREATVEPRFELFHFVFSVCSQKVRGTLMEKGVTFGSNELTILPPQSENYCPQYVRLRLRSEAAAKHRPVSSFTGQSSVDSEGFDPLVVPTLVDHETGRILADSKAICLYLCDALSGGTDLLPADIREAVLKQVQLADTTPHVALLYGADPDGDRRPESMQAVMPGIHAHKIDAVRRNIPLADGDPLLLEAYQHKIVKEEAAASFVINEPQMRTAISKAEQLVTDLDRDLGASTGPWLFGDRFTLADLFWAVSLYRFLWLGYSGFWKDGAGKPRVEAYANRLFARPSVKDAIIQWPGHPPSENVIHLLSNA</sequence>
<accession>A0A1L5BUX8</accession>
<accession>P95806</accession>
<feature type="chain" id="PRO_0000444942" description="2,5-dichlorohydroquinone reductive dechlorinase">
    <location>
        <begin position="1"/>
        <end position="346"/>
    </location>
</feature>
<feature type="domain" description="GST N-terminal" evidence="2">
    <location>
        <begin position="43"/>
        <end position="154"/>
    </location>
</feature>
<feature type="domain" description="GST C-terminal" evidence="3">
    <location>
        <begin position="189"/>
        <end position="335"/>
    </location>
</feature>
<feature type="sequence conflict" description="In Ref. 1; AAN64243." evidence="5" ref="1">
    <original>K</original>
    <variation>R</variation>
    <location>
        <position position="206"/>
    </location>
</feature>
<geneLocation type="plasmid" evidence="8">
    <name>pSRL3</name>
</geneLocation>
<keyword id="KW-0058">Aromatic hydrocarbons catabolism</keyword>
<keyword id="KW-0216">Detoxification</keyword>
<keyword id="KW-0614">Plasmid</keyword>
<keyword id="KW-0808">Transferase</keyword>
<comment type="function">
    <text evidence="1 6">Catalyzes the degradation of 2,5-dichlorohydroquinone (2,5-DCHQ) into hydroquinone (HQ) via chlorohydroquinone (CHQ).</text>
</comment>
<comment type="catalytic activity">
    <reaction evidence="1">
        <text>2,5-dichlorohydroquinone + 2 glutathione = chlorohydroquinone + glutathione disulfide + chloride + H(+)</text>
        <dbReference type="Rhea" id="RHEA:53012"/>
        <dbReference type="ChEBI" id="CHEBI:15378"/>
        <dbReference type="ChEBI" id="CHEBI:17996"/>
        <dbReference type="ChEBI" id="CHEBI:27545"/>
        <dbReference type="ChEBI" id="CHEBI:27675"/>
        <dbReference type="ChEBI" id="CHEBI:57925"/>
        <dbReference type="ChEBI" id="CHEBI:58297"/>
    </reaction>
</comment>
<comment type="catalytic activity">
    <reaction evidence="1">
        <text>chlorohydroquinone + 2 glutathione = hydroquinone + glutathione disulfide + chloride + H(+)</text>
        <dbReference type="Rhea" id="RHEA:53016"/>
        <dbReference type="ChEBI" id="CHEBI:15378"/>
        <dbReference type="ChEBI" id="CHEBI:17594"/>
        <dbReference type="ChEBI" id="CHEBI:17996"/>
        <dbReference type="ChEBI" id="CHEBI:27675"/>
        <dbReference type="ChEBI" id="CHEBI:57925"/>
        <dbReference type="ChEBI" id="CHEBI:58297"/>
    </reaction>
</comment>
<comment type="pathway">
    <text evidence="6">Xenobiotic degradation; gamma-hexachlorocyclohexane degradation.</text>
</comment>
<comment type="miscellaneous">
    <text evidence="1">The mechanism of this reaction probably involves a glutathione transfer: the halogen is firstly removed through substitution with glutathione, which is then removed by displacement of the aromatic moiety by a second glutathione molecule, producing oxidized glutathione (GS-SG).</text>
</comment>
<comment type="similarity">
    <text evidence="5">Belongs to the GST superfamily.</text>
</comment>
<comment type="sequence caution" evidence="5">
    <conflict type="erroneous initiation">
        <sequence resource="EMBL-CDS" id="APL96652"/>
    </conflict>
    <text>Truncated N-terminus.</text>
</comment>
<proteinExistence type="inferred from homology"/>
<gene>
    <name evidence="4" type="primary">linD</name>
    <name evidence="7" type="ORF">SIDU_18555</name>
</gene>
<evidence type="ECO:0000250" key="1">
    <source>
        <dbReference type="UniProtKB" id="D4Z909"/>
    </source>
</evidence>
<evidence type="ECO:0000255" key="2">
    <source>
        <dbReference type="PROSITE-ProRule" id="PRU00684"/>
    </source>
</evidence>
<evidence type="ECO:0000255" key="3">
    <source>
        <dbReference type="PROSITE-ProRule" id="PRU00685"/>
    </source>
</evidence>
<evidence type="ECO:0000303" key="4">
    <source>
    </source>
</evidence>
<evidence type="ECO:0000305" key="5"/>
<evidence type="ECO:0000305" key="6">
    <source>
    </source>
</evidence>
<evidence type="ECO:0000312" key="7">
    <source>
        <dbReference type="EMBL" id="APL96652.1"/>
    </source>
</evidence>
<evidence type="ECO:0000312" key="8">
    <source>
        <dbReference type="Proteomes" id="UP000004550"/>
    </source>
</evidence>